<comment type="function">
    <text evidence="2 3 4">Catalyzes the oxidation of (R)-2-hydroxyglutarate to 2-oxoglutarate. May be involved in the catabolism of propionyl-CoA derived from beta-oxidation. Involved in degradation of lysine for the supply of carbon and electrons to the ETF/ETFQO complex during dark-induced sugar starvation.</text>
</comment>
<comment type="catalytic activity">
    <reaction evidence="2">
        <text>(R)-2-hydroxyglutarate + A = 2-oxoglutarate + AH2</text>
        <dbReference type="Rhea" id="RHEA:38295"/>
        <dbReference type="ChEBI" id="CHEBI:13193"/>
        <dbReference type="ChEBI" id="CHEBI:15801"/>
        <dbReference type="ChEBI" id="CHEBI:16810"/>
        <dbReference type="ChEBI" id="CHEBI:17499"/>
        <dbReference type="EC" id="1.1.99.39"/>
    </reaction>
</comment>
<comment type="cofactor">
    <cofactor evidence="2">
        <name>FAD</name>
        <dbReference type="ChEBI" id="CHEBI:57692"/>
    </cofactor>
    <text evidence="2">Binds 1 FAD per monomer.</text>
</comment>
<comment type="biophysicochemical properties">
    <kinetics>
        <KM evidence="2">584 uM for (R)-2-hydroxyglutarate (with DCIP as acceptor molecule)</KM>
        <text>Very low activity toward D-lactate, D-2-hydroxybutyrate and meso-tartrate. Does not efficiently use cytochrome c as electron acceptor and is not able to transfer electrons to NAD or NADP.</text>
    </kinetics>
    <phDependence>
        <text evidence="2">Optimum pH is 8.5-9.5.</text>
    </phDependence>
</comment>
<comment type="subunit">
    <text evidence="2">Homodimer.</text>
</comment>
<comment type="subcellular location">
    <subcellularLocation>
        <location evidence="2 4 7">Mitochondrion</location>
    </subcellularLocation>
</comment>
<comment type="induction">
    <text evidence="4">By dark-induced senescence.</text>
</comment>
<comment type="disruption phenotype">
    <text evidence="2 3">No visible phenotype when grown under standard conditions.</text>
</comment>
<comment type="similarity">
    <text evidence="6">Belongs to the FAD-binding oxidoreductase/transferase type 4 family.</text>
</comment>
<comment type="sequence caution" evidence="6">
    <conflict type="miscellaneous discrepancy">
        <sequence resource="EMBL-CDS" id="AAL24169"/>
    </conflict>
    <text>Intron retention.</text>
</comment>
<comment type="sequence caution" evidence="6">
    <conflict type="erroneous gene model prediction">
        <sequence resource="EMBL-CDS" id="CAB16815"/>
    </conflict>
</comment>
<comment type="sequence caution" evidence="6">
    <conflict type="erroneous gene model prediction">
        <sequence resource="EMBL-CDS" id="CAB80306"/>
    </conflict>
</comment>
<gene>
    <name type="primary">D2HGDH</name>
    <name type="ordered locus">At4g36400</name>
    <name type="ORF">AP22.14</name>
    <name type="ORF">C7A10.960</name>
</gene>
<reference key="1">
    <citation type="journal article" date="1998" name="Nature">
        <title>Analysis of 1.9 Mb of contiguous sequence from chromosome 4 of Arabidopsis thaliana.</title>
        <authorList>
            <person name="Bevan M."/>
            <person name="Bancroft I."/>
            <person name="Bent E."/>
            <person name="Love K."/>
            <person name="Goodman H.M."/>
            <person name="Dean C."/>
            <person name="Bergkamp R."/>
            <person name="Dirkse W."/>
            <person name="van Staveren M."/>
            <person name="Stiekema W."/>
            <person name="Drost L."/>
            <person name="Ridley P."/>
            <person name="Hudson S.-A."/>
            <person name="Patel K."/>
            <person name="Murphy G."/>
            <person name="Piffanelli P."/>
            <person name="Wedler H."/>
            <person name="Wedler E."/>
            <person name="Wambutt R."/>
            <person name="Weitzenegger T."/>
            <person name="Pohl T."/>
            <person name="Terryn N."/>
            <person name="Gielen J."/>
            <person name="Villarroel R."/>
            <person name="De Clercq R."/>
            <person name="van Montagu M."/>
            <person name="Lecharny A."/>
            <person name="Aubourg S."/>
            <person name="Gy I."/>
            <person name="Kreis M."/>
            <person name="Lao N."/>
            <person name="Kavanagh T."/>
            <person name="Hempel S."/>
            <person name="Kotter P."/>
            <person name="Entian K.-D."/>
            <person name="Rieger M."/>
            <person name="Schaefer M."/>
            <person name="Funk B."/>
            <person name="Mueller-Auer S."/>
            <person name="Silvey M."/>
            <person name="James R."/>
            <person name="Monfort A."/>
            <person name="Pons A."/>
            <person name="Puigdomenech P."/>
            <person name="Douka A."/>
            <person name="Voukelatou E."/>
            <person name="Milioni D."/>
            <person name="Hatzopoulos P."/>
            <person name="Piravandi E."/>
            <person name="Obermaier B."/>
            <person name="Hilbert H."/>
            <person name="Duesterhoeft A."/>
            <person name="Moores T."/>
            <person name="Jones J.D.G."/>
            <person name="Eneva T."/>
            <person name="Palme K."/>
            <person name="Benes V."/>
            <person name="Rechmann S."/>
            <person name="Ansorge W."/>
            <person name="Cooke R."/>
            <person name="Berger C."/>
            <person name="Delseny M."/>
            <person name="Voet M."/>
            <person name="Volckaert G."/>
            <person name="Mewes H.-W."/>
            <person name="Klosterman S."/>
            <person name="Schueller C."/>
            <person name="Chalwatzis N."/>
        </authorList>
    </citation>
    <scope>NUCLEOTIDE SEQUENCE [LARGE SCALE GENOMIC DNA]</scope>
    <source>
        <strain>cv. Columbia</strain>
    </source>
</reference>
<reference key="2">
    <citation type="journal article" date="1999" name="Nature">
        <title>Sequence and analysis of chromosome 4 of the plant Arabidopsis thaliana.</title>
        <authorList>
            <person name="Mayer K.F.X."/>
            <person name="Schueller C."/>
            <person name="Wambutt R."/>
            <person name="Murphy G."/>
            <person name="Volckaert G."/>
            <person name="Pohl T."/>
            <person name="Duesterhoeft A."/>
            <person name="Stiekema W."/>
            <person name="Entian K.-D."/>
            <person name="Terryn N."/>
            <person name="Harris B."/>
            <person name="Ansorge W."/>
            <person name="Brandt P."/>
            <person name="Grivell L.A."/>
            <person name="Rieger M."/>
            <person name="Weichselgartner M."/>
            <person name="de Simone V."/>
            <person name="Obermaier B."/>
            <person name="Mache R."/>
            <person name="Mueller M."/>
            <person name="Kreis M."/>
            <person name="Delseny M."/>
            <person name="Puigdomenech P."/>
            <person name="Watson M."/>
            <person name="Schmidtheini T."/>
            <person name="Reichert B."/>
            <person name="Portetelle D."/>
            <person name="Perez-Alonso M."/>
            <person name="Boutry M."/>
            <person name="Bancroft I."/>
            <person name="Vos P."/>
            <person name="Hoheisel J."/>
            <person name="Zimmermann W."/>
            <person name="Wedler H."/>
            <person name="Ridley P."/>
            <person name="Langham S.-A."/>
            <person name="McCullagh B."/>
            <person name="Bilham L."/>
            <person name="Robben J."/>
            <person name="van der Schueren J."/>
            <person name="Grymonprez B."/>
            <person name="Chuang Y.-J."/>
            <person name="Vandenbussche F."/>
            <person name="Braeken M."/>
            <person name="Weltjens I."/>
            <person name="Voet M."/>
            <person name="Bastiaens I."/>
            <person name="Aert R."/>
            <person name="Defoor E."/>
            <person name="Weitzenegger T."/>
            <person name="Bothe G."/>
            <person name="Ramsperger U."/>
            <person name="Hilbert H."/>
            <person name="Braun M."/>
            <person name="Holzer E."/>
            <person name="Brandt A."/>
            <person name="Peters S."/>
            <person name="van Staveren M."/>
            <person name="Dirkse W."/>
            <person name="Mooijman P."/>
            <person name="Klein Lankhorst R."/>
            <person name="Rose M."/>
            <person name="Hauf J."/>
            <person name="Koetter P."/>
            <person name="Berneiser S."/>
            <person name="Hempel S."/>
            <person name="Feldpausch M."/>
            <person name="Lamberth S."/>
            <person name="Van den Daele H."/>
            <person name="De Keyser A."/>
            <person name="Buysshaert C."/>
            <person name="Gielen J."/>
            <person name="Villarroel R."/>
            <person name="De Clercq R."/>
            <person name="van Montagu M."/>
            <person name="Rogers J."/>
            <person name="Cronin A."/>
            <person name="Quail M.A."/>
            <person name="Bray-Allen S."/>
            <person name="Clark L."/>
            <person name="Doggett J."/>
            <person name="Hall S."/>
            <person name="Kay M."/>
            <person name="Lennard N."/>
            <person name="McLay K."/>
            <person name="Mayes R."/>
            <person name="Pettett A."/>
            <person name="Rajandream M.A."/>
            <person name="Lyne M."/>
            <person name="Benes V."/>
            <person name="Rechmann S."/>
            <person name="Borkova D."/>
            <person name="Bloecker H."/>
            <person name="Scharfe M."/>
            <person name="Grimm M."/>
            <person name="Loehnert T.-H."/>
            <person name="Dose S."/>
            <person name="de Haan M."/>
            <person name="Maarse A.C."/>
            <person name="Schaefer M."/>
            <person name="Mueller-Auer S."/>
            <person name="Gabel C."/>
            <person name="Fuchs M."/>
            <person name="Fartmann B."/>
            <person name="Granderath K."/>
            <person name="Dauner D."/>
            <person name="Herzl A."/>
            <person name="Neumann S."/>
            <person name="Argiriou A."/>
            <person name="Vitale D."/>
            <person name="Liguori R."/>
            <person name="Piravandi E."/>
            <person name="Massenet O."/>
            <person name="Quigley F."/>
            <person name="Clabauld G."/>
            <person name="Muendlein A."/>
            <person name="Felber R."/>
            <person name="Schnabl S."/>
            <person name="Hiller R."/>
            <person name="Schmidt W."/>
            <person name="Lecharny A."/>
            <person name="Aubourg S."/>
            <person name="Chefdor F."/>
            <person name="Cooke R."/>
            <person name="Berger C."/>
            <person name="Monfort A."/>
            <person name="Casacuberta E."/>
            <person name="Gibbons T."/>
            <person name="Weber N."/>
            <person name="Vandenbol M."/>
            <person name="Bargues M."/>
            <person name="Terol J."/>
            <person name="Torres A."/>
            <person name="Perez-Perez A."/>
            <person name="Purnelle B."/>
            <person name="Bent E."/>
            <person name="Johnson S."/>
            <person name="Tacon D."/>
            <person name="Jesse T."/>
            <person name="Heijnen L."/>
            <person name="Schwarz S."/>
            <person name="Scholler P."/>
            <person name="Heber S."/>
            <person name="Francs P."/>
            <person name="Bielke C."/>
            <person name="Frishman D."/>
            <person name="Haase D."/>
            <person name="Lemcke K."/>
            <person name="Mewes H.-W."/>
            <person name="Stocker S."/>
            <person name="Zaccaria P."/>
            <person name="Bevan M."/>
            <person name="Wilson R.K."/>
            <person name="de la Bastide M."/>
            <person name="Habermann K."/>
            <person name="Parnell L."/>
            <person name="Dedhia N."/>
            <person name="Gnoj L."/>
            <person name="Schutz K."/>
            <person name="Huang E."/>
            <person name="Spiegel L."/>
            <person name="Sekhon M."/>
            <person name="Murray J."/>
            <person name="Sheet P."/>
            <person name="Cordes M."/>
            <person name="Abu-Threideh J."/>
            <person name="Stoneking T."/>
            <person name="Kalicki J."/>
            <person name="Graves T."/>
            <person name="Harmon G."/>
            <person name="Edwards J."/>
            <person name="Latreille P."/>
            <person name="Courtney L."/>
            <person name="Cloud J."/>
            <person name="Abbott A."/>
            <person name="Scott K."/>
            <person name="Johnson D."/>
            <person name="Minx P."/>
            <person name="Bentley D."/>
            <person name="Fulton B."/>
            <person name="Miller N."/>
            <person name="Greco T."/>
            <person name="Kemp K."/>
            <person name="Kramer J."/>
            <person name="Fulton L."/>
            <person name="Mardis E."/>
            <person name="Dante M."/>
            <person name="Pepin K."/>
            <person name="Hillier L.W."/>
            <person name="Nelson J."/>
            <person name="Spieth J."/>
            <person name="Ryan E."/>
            <person name="Andrews S."/>
            <person name="Geisel C."/>
            <person name="Layman D."/>
            <person name="Du H."/>
            <person name="Ali J."/>
            <person name="Berghoff A."/>
            <person name="Jones K."/>
            <person name="Drone K."/>
            <person name="Cotton M."/>
            <person name="Joshu C."/>
            <person name="Antonoiu B."/>
            <person name="Zidanic M."/>
            <person name="Strong C."/>
            <person name="Sun H."/>
            <person name="Lamar B."/>
            <person name="Yordan C."/>
            <person name="Ma P."/>
            <person name="Zhong J."/>
            <person name="Preston R."/>
            <person name="Vil D."/>
            <person name="Shekher M."/>
            <person name="Matero A."/>
            <person name="Shah R."/>
            <person name="Swaby I.K."/>
            <person name="O'Shaughnessy A."/>
            <person name="Rodriguez M."/>
            <person name="Hoffman J."/>
            <person name="Till S."/>
            <person name="Granat S."/>
            <person name="Shohdy N."/>
            <person name="Hasegawa A."/>
            <person name="Hameed A."/>
            <person name="Lodhi M."/>
            <person name="Johnson A."/>
            <person name="Chen E."/>
            <person name="Marra M.A."/>
            <person name="Martienssen R."/>
            <person name="McCombie W.R."/>
        </authorList>
    </citation>
    <scope>NUCLEOTIDE SEQUENCE [LARGE SCALE GENOMIC DNA]</scope>
    <source>
        <strain>cv. Columbia</strain>
    </source>
</reference>
<reference key="3">
    <citation type="journal article" date="2017" name="Plant J.">
        <title>Araport11: a complete reannotation of the Arabidopsis thaliana reference genome.</title>
        <authorList>
            <person name="Cheng C.Y."/>
            <person name="Krishnakumar V."/>
            <person name="Chan A.P."/>
            <person name="Thibaud-Nissen F."/>
            <person name="Schobel S."/>
            <person name="Town C.D."/>
        </authorList>
    </citation>
    <scope>GENOME REANNOTATION</scope>
    <source>
        <strain>cv. Columbia</strain>
    </source>
</reference>
<reference key="4">
    <citation type="journal article" date="2003" name="Science">
        <title>Empirical analysis of transcriptional activity in the Arabidopsis genome.</title>
        <authorList>
            <person name="Yamada K."/>
            <person name="Lim J."/>
            <person name="Dale J.M."/>
            <person name="Chen H."/>
            <person name="Shinn P."/>
            <person name="Palm C.J."/>
            <person name="Southwick A.M."/>
            <person name="Wu H.C."/>
            <person name="Kim C.J."/>
            <person name="Nguyen M."/>
            <person name="Pham P.K."/>
            <person name="Cheuk R.F."/>
            <person name="Karlin-Newmann G."/>
            <person name="Liu S.X."/>
            <person name="Lam B."/>
            <person name="Sakano H."/>
            <person name="Wu T."/>
            <person name="Yu G."/>
            <person name="Miranda M."/>
            <person name="Quach H.L."/>
            <person name="Tripp M."/>
            <person name="Chang C.H."/>
            <person name="Lee J.M."/>
            <person name="Toriumi M.J."/>
            <person name="Chan M.M."/>
            <person name="Tang C.C."/>
            <person name="Onodera C.S."/>
            <person name="Deng J.M."/>
            <person name="Akiyama K."/>
            <person name="Ansari Y."/>
            <person name="Arakawa T."/>
            <person name="Banh J."/>
            <person name="Banno F."/>
            <person name="Bowser L."/>
            <person name="Brooks S.Y."/>
            <person name="Carninci P."/>
            <person name="Chao Q."/>
            <person name="Choy N."/>
            <person name="Enju A."/>
            <person name="Goldsmith A.D."/>
            <person name="Gurjal M."/>
            <person name="Hansen N.F."/>
            <person name="Hayashizaki Y."/>
            <person name="Johnson-Hopson C."/>
            <person name="Hsuan V.W."/>
            <person name="Iida K."/>
            <person name="Karnes M."/>
            <person name="Khan S."/>
            <person name="Koesema E."/>
            <person name="Ishida J."/>
            <person name="Jiang P.X."/>
            <person name="Jones T."/>
            <person name="Kawai J."/>
            <person name="Kamiya A."/>
            <person name="Meyers C."/>
            <person name="Nakajima M."/>
            <person name="Narusaka M."/>
            <person name="Seki M."/>
            <person name="Sakurai T."/>
            <person name="Satou M."/>
            <person name="Tamse R."/>
            <person name="Vaysberg M."/>
            <person name="Wallender E.K."/>
            <person name="Wong C."/>
            <person name="Yamamura Y."/>
            <person name="Yuan S."/>
            <person name="Shinozaki K."/>
            <person name="Davis R.W."/>
            <person name="Theologis A."/>
            <person name="Ecker J.R."/>
        </authorList>
    </citation>
    <scope>NUCLEOTIDE SEQUENCE [LARGE SCALE MRNA]</scope>
    <source>
        <strain>cv. Columbia</strain>
    </source>
</reference>
<reference key="5">
    <citation type="journal article" date="2009" name="J. Biol. Chem.">
        <title>Two D-2-hydroxy-acid dehydrogenases in Arabidopsis thaliana with catalytic capacities to participate in the last reactions of the methylglyoxal and beta-oxidation pathways.</title>
        <authorList>
            <person name="Engqvist M."/>
            <person name="Drincovich M.F."/>
            <person name="Fluegge U.I."/>
            <person name="Maurino V.G."/>
        </authorList>
    </citation>
    <scope>FUNCTION</scope>
    <scope>CATALYTIC ACTIVITY</scope>
    <scope>SUBUNIT</scope>
    <scope>COFACTOR</scope>
    <scope>BIOPHYSICOCHEMICAL PROPERTIES</scope>
    <scope>SUBCELLULAR LOCATION</scope>
    <scope>DISRUPTION PHENOTYPE</scope>
</reference>
<reference key="6">
    <citation type="journal article" date="2010" name="Plant Cell">
        <title>Identification of the 2-hydroxyglutarate and isovaleryl-CoA dehydrogenases as alternative electron donors linking lysine catabolism to the electron transport chain of Arabidopsis mitochondria.</title>
        <authorList>
            <person name="Araujo W.L."/>
            <person name="Ishizaki K."/>
            <person name="Nunes-Nesi A."/>
            <person name="Larson T.R."/>
            <person name="Tohge T."/>
            <person name="Krahnert I."/>
            <person name="Witt S."/>
            <person name="Obata T."/>
            <person name="Schauer N."/>
            <person name="Graham I.A."/>
            <person name="Leaver C.J."/>
            <person name="Fernie A.R."/>
        </authorList>
    </citation>
    <scope>FUNCTION</scope>
    <scope>DISRUPTION PHENOTYPE</scope>
</reference>
<reference key="7">
    <citation type="journal article" date="2011" name="J. Biol. Chem.">
        <title>Plant D-2-hydroxyglutarate dehydrogenase participates in the catabolism of lysine especially during senescence.</title>
        <authorList>
            <person name="Engqvist M.K."/>
            <person name="Kuhn A."/>
            <person name="Wienstroer J."/>
            <person name="Weber K."/>
            <person name="Jansen E.E."/>
            <person name="Jakobs C."/>
            <person name="Weber A.P."/>
            <person name="Maurino V.G."/>
        </authorList>
    </citation>
    <scope>FUNCTION</scope>
    <scope>SUBCELLULAR LOCATION</scope>
    <scope>INDUCTION</scope>
</reference>
<reference key="8">
    <citation type="journal article" date="2015" name="J. Exp. Bot.">
        <title>Identification of cleavage sites and substrate proteins for two mitochondrial intermediate peptidases in Arabidopsis thaliana.</title>
        <authorList>
            <person name="Carrie C."/>
            <person name="Venne A.S."/>
            <person name="Zahedi R.P."/>
            <person name="Soll J."/>
        </authorList>
    </citation>
    <scope>IDENTIFICATION BY MASS SPECTROMETRY</scope>
    <scope>CLEAVAGE OF TRANSIT PEPTIDE AFTER PHE-78</scope>
</reference>
<keyword id="KW-0274">FAD</keyword>
<keyword id="KW-0285">Flavoprotein</keyword>
<keyword id="KW-0496">Mitochondrion</keyword>
<keyword id="KW-0560">Oxidoreductase</keyword>
<keyword id="KW-1185">Reference proteome</keyword>
<keyword id="KW-0809">Transit peptide</keyword>
<organism>
    <name type="scientific">Arabidopsis thaliana</name>
    <name type="common">Mouse-ear cress</name>
    <dbReference type="NCBI Taxonomy" id="3702"/>
    <lineage>
        <taxon>Eukaryota</taxon>
        <taxon>Viridiplantae</taxon>
        <taxon>Streptophyta</taxon>
        <taxon>Embryophyta</taxon>
        <taxon>Tracheophyta</taxon>
        <taxon>Spermatophyta</taxon>
        <taxon>Magnoliopsida</taxon>
        <taxon>eudicotyledons</taxon>
        <taxon>Gunneridae</taxon>
        <taxon>Pentapetalae</taxon>
        <taxon>rosids</taxon>
        <taxon>malvids</taxon>
        <taxon>Brassicales</taxon>
        <taxon>Brassicaceae</taxon>
        <taxon>Camelineae</taxon>
        <taxon>Arabidopsis</taxon>
    </lineage>
</organism>
<protein>
    <recommendedName>
        <fullName>D-2-hydroxyglutarate dehydrogenase, mitochondrial</fullName>
        <shortName>AtD-2HGDH</shortName>
        <ecNumber>1.1.99.39</ecNumber>
    </recommendedName>
</protein>
<feature type="transit peptide" description="Mitochondrion" evidence="5">
    <location>
        <begin position="1"/>
        <end position="78"/>
    </location>
</feature>
<feature type="chain" id="PRO_0000393389" description="D-2-hydroxyglutarate dehydrogenase, mitochondrial">
    <location>
        <begin position="79"/>
        <end position="559"/>
    </location>
</feature>
<feature type="domain" description="FAD-binding PCMH-type" evidence="1">
    <location>
        <begin position="130"/>
        <end position="309"/>
    </location>
</feature>
<sequence length="559" mass="61445">MMMQKLRRSGEFIRFGCKSLISSRPNKDSVSRSVSGFVNHYKSKGKLFELSDGNYKTELHHPCISRNVGMLLQQYKCFGSSAASLIQRNPLFSSLDSKDVSYFKEILGEKNVVEDKERLETANTDWMHKYKGSSKLMLLPKNTQEVSQILEYCDSRRLAVVPQGGNTGLVGGSVPVFDEVIVNVGLMNKILSFDEVSGVLVCEAGCILENLATFLDTKGFIMPLDLGAKGSCHIGGNVSTNAGGLRLIRYGSLHGTVLGLEAVTANGNVLDMLGTLRKDNTGYDLKHLFIGSEGSLGIVTKVSILTQPKLSSVNLAFIACKDYLSCQKLLVEAKRNLGEILSAFEFLDNNSMDLVLNHLDGVRNPVSSSENFYILIETTGSDETNDREKLEAFLLKSLEKGLVSDGVIAQDINQASSFWRIREGITEALQKAGAVYKYDLSLPVEEIYNIVNDLRGRLGDLANVMGYGHLGDGNLHLNISAAEYNDKLLGLIEPYVYEWTSKHRGSISAEHGLGVMKANEIFYSKSPETVALMASIKKLLDPKGILNPYKVLPHSLFSN</sequence>
<accession>O23240</accession>
<accession>Q93Z78</accession>
<evidence type="ECO:0000255" key="1">
    <source>
        <dbReference type="PROSITE-ProRule" id="PRU00718"/>
    </source>
</evidence>
<evidence type="ECO:0000269" key="2">
    <source>
    </source>
</evidence>
<evidence type="ECO:0000269" key="3">
    <source>
    </source>
</evidence>
<evidence type="ECO:0000269" key="4">
    <source>
    </source>
</evidence>
<evidence type="ECO:0000269" key="5">
    <source>
    </source>
</evidence>
<evidence type="ECO:0000305" key="6"/>
<evidence type="ECO:0000305" key="7">
    <source>
    </source>
</evidence>
<proteinExistence type="evidence at protein level"/>
<dbReference type="EC" id="1.1.99.39"/>
<dbReference type="EMBL" id="Z99708">
    <property type="protein sequence ID" value="CAB16815.1"/>
    <property type="status" value="ALT_SEQ"/>
    <property type="molecule type" value="Genomic_DNA"/>
</dbReference>
<dbReference type="EMBL" id="AL161589">
    <property type="protein sequence ID" value="CAB80306.1"/>
    <property type="status" value="ALT_SEQ"/>
    <property type="molecule type" value="Genomic_DNA"/>
</dbReference>
<dbReference type="EMBL" id="CP002687">
    <property type="protein sequence ID" value="AEE86651.1"/>
    <property type="molecule type" value="Genomic_DNA"/>
</dbReference>
<dbReference type="EMBL" id="CP002687">
    <property type="protein sequence ID" value="AEE86652.1"/>
    <property type="molecule type" value="Genomic_DNA"/>
</dbReference>
<dbReference type="EMBL" id="AY058061">
    <property type="protein sequence ID" value="AAL24169.1"/>
    <property type="status" value="ALT_SEQ"/>
    <property type="molecule type" value="mRNA"/>
</dbReference>
<dbReference type="EMBL" id="AY090301">
    <property type="protein sequence ID" value="AAL90962.1"/>
    <property type="molecule type" value="mRNA"/>
</dbReference>
<dbReference type="PIR" id="F85429">
    <property type="entry name" value="F85429"/>
</dbReference>
<dbReference type="RefSeq" id="NP_001320151.1">
    <property type="nucleotide sequence ID" value="NM_001342409.1"/>
</dbReference>
<dbReference type="RefSeq" id="NP_974692.1">
    <property type="nucleotide sequence ID" value="NM_202963.2"/>
</dbReference>
<dbReference type="SMR" id="O23240"/>
<dbReference type="BioGRID" id="15074">
    <property type="interactions" value="1"/>
</dbReference>
<dbReference type="FunCoup" id="O23240">
    <property type="interactions" value="2226"/>
</dbReference>
<dbReference type="STRING" id="3702.O23240"/>
<dbReference type="PaxDb" id="3702-AT4G36400.2"/>
<dbReference type="ProteomicsDB" id="222598"/>
<dbReference type="EnsemblPlants" id="AT4G36400.1">
    <property type="protein sequence ID" value="AT4G36400.1"/>
    <property type="gene ID" value="AT4G36400"/>
</dbReference>
<dbReference type="EnsemblPlants" id="AT4G36400.2">
    <property type="protein sequence ID" value="AT4G36400.2"/>
    <property type="gene ID" value="AT4G36400"/>
</dbReference>
<dbReference type="GeneID" id="829792"/>
<dbReference type="Gramene" id="AT4G36400.1">
    <property type="protein sequence ID" value="AT4G36400.1"/>
    <property type="gene ID" value="AT4G36400"/>
</dbReference>
<dbReference type="Gramene" id="AT4G36400.2">
    <property type="protein sequence ID" value="AT4G36400.2"/>
    <property type="gene ID" value="AT4G36400"/>
</dbReference>
<dbReference type="KEGG" id="ath:AT4G36400"/>
<dbReference type="Araport" id="AT4G36400"/>
<dbReference type="TAIR" id="AT4G36400">
    <property type="gene designation" value="D2HGDH"/>
</dbReference>
<dbReference type="eggNOG" id="KOG1232">
    <property type="taxonomic scope" value="Eukaryota"/>
</dbReference>
<dbReference type="HOGENOM" id="CLU_017779_4_1_1"/>
<dbReference type="InParanoid" id="O23240"/>
<dbReference type="OMA" id="YNEDWMR"/>
<dbReference type="PhylomeDB" id="O23240"/>
<dbReference type="BioCyc" id="ARA:MONOMERQT-4168"/>
<dbReference type="PRO" id="PR:O23240"/>
<dbReference type="Proteomes" id="UP000006548">
    <property type="component" value="Chromosome 4"/>
</dbReference>
<dbReference type="ExpressionAtlas" id="O23240">
    <property type="expression patterns" value="baseline and differential"/>
</dbReference>
<dbReference type="GO" id="GO:0005739">
    <property type="term" value="C:mitochondrion"/>
    <property type="evidence" value="ECO:0007005"/>
    <property type="project" value="TAIR"/>
</dbReference>
<dbReference type="GO" id="GO:0005886">
    <property type="term" value="C:plasma membrane"/>
    <property type="evidence" value="ECO:0007005"/>
    <property type="project" value="TAIR"/>
</dbReference>
<dbReference type="GO" id="GO:0051990">
    <property type="term" value="F:(R)-2-hydroxyglutarate dehydrogenase activity"/>
    <property type="evidence" value="ECO:0000314"/>
    <property type="project" value="TAIR"/>
</dbReference>
<dbReference type="GO" id="GO:0047545">
    <property type="term" value="F:2-hydroxyglutarate dehydrogenase activity"/>
    <property type="evidence" value="ECO:0000314"/>
    <property type="project" value="TAIR"/>
</dbReference>
<dbReference type="GO" id="GO:0071949">
    <property type="term" value="F:FAD binding"/>
    <property type="evidence" value="ECO:0007669"/>
    <property type="project" value="InterPro"/>
</dbReference>
<dbReference type="GO" id="GO:0010230">
    <property type="term" value="P:alternative respiration"/>
    <property type="evidence" value="ECO:0000315"/>
    <property type="project" value="TAIR"/>
</dbReference>
<dbReference type="GO" id="GO:0009853">
    <property type="term" value="P:photorespiration"/>
    <property type="evidence" value="ECO:0000316"/>
    <property type="project" value="TAIR"/>
</dbReference>
<dbReference type="FunFam" id="3.30.70.2190:FF:000001">
    <property type="entry name" value="D-2-hydroxyglutarate dehydrogenase mitochondrial"/>
    <property type="match status" value="1"/>
</dbReference>
<dbReference type="FunFam" id="3.30.70.2740:FF:000002">
    <property type="entry name" value="D-2-hydroxyglutarate dehydrogenase mitochondrial"/>
    <property type="match status" value="1"/>
</dbReference>
<dbReference type="FunFam" id="3.30.43.10:FF:000002">
    <property type="entry name" value="D-2-hydroxyglutarate dehydrogenase, mitochondrial"/>
    <property type="match status" value="1"/>
</dbReference>
<dbReference type="FunFam" id="3.30.465.10:FF:000001">
    <property type="entry name" value="D-2-hydroxyglutarate dehydrogenase, mitochondrial"/>
    <property type="match status" value="1"/>
</dbReference>
<dbReference type="FunFam" id="1.10.45.10:FF:000001">
    <property type="entry name" value="D-lactate dehydrogenase mitochondrial"/>
    <property type="match status" value="1"/>
</dbReference>
<dbReference type="Gene3D" id="3.30.465.10">
    <property type="match status" value="1"/>
</dbReference>
<dbReference type="Gene3D" id="3.30.70.2190">
    <property type="match status" value="1"/>
</dbReference>
<dbReference type="Gene3D" id="3.30.70.2740">
    <property type="match status" value="1"/>
</dbReference>
<dbReference type="Gene3D" id="3.30.43.10">
    <property type="entry name" value="Uridine Diphospho-n-acetylenolpyruvylglucosamine Reductase, domain 2"/>
    <property type="match status" value="1"/>
</dbReference>
<dbReference type="Gene3D" id="1.10.45.10">
    <property type="entry name" value="Vanillyl-alcohol Oxidase, Chain A, domain 4"/>
    <property type="match status" value="1"/>
</dbReference>
<dbReference type="InterPro" id="IPR004113">
    <property type="entry name" value="FAD-bd_oxidored_4_C"/>
</dbReference>
<dbReference type="InterPro" id="IPR016166">
    <property type="entry name" value="FAD-bd_PCMH"/>
</dbReference>
<dbReference type="InterPro" id="IPR036318">
    <property type="entry name" value="FAD-bd_PCMH-like_sf"/>
</dbReference>
<dbReference type="InterPro" id="IPR016167">
    <property type="entry name" value="FAD-bd_PCMH_sub1"/>
</dbReference>
<dbReference type="InterPro" id="IPR016169">
    <property type="entry name" value="FAD-bd_PCMH_sub2"/>
</dbReference>
<dbReference type="InterPro" id="IPR016164">
    <property type="entry name" value="FAD-linked_Oxase-like_C"/>
</dbReference>
<dbReference type="InterPro" id="IPR051264">
    <property type="entry name" value="FAD-oxidored/transferase_4"/>
</dbReference>
<dbReference type="InterPro" id="IPR006094">
    <property type="entry name" value="Oxid_FAD_bind_N"/>
</dbReference>
<dbReference type="InterPro" id="IPR016171">
    <property type="entry name" value="Vanillyl_alc_oxidase_C-sub2"/>
</dbReference>
<dbReference type="PANTHER" id="PTHR43716">
    <property type="entry name" value="D-2-HYDROXYGLUTARATE DEHYDROGENASE, MITOCHONDRIAL"/>
    <property type="match status" value="1"/>
</dbReference>
<dbReference type="PANTHER" id="PTHR43716:SF1">
    <property type="entry name" value="D-2-HYDROXYGLUTARATE DEHYDROGENASE, MITOCHONDRIAL"/>
    <property type="match status" value="1"/>
</dbReference>
<dbReference type="Pfam" id="PF02913">
    <property type="entry name" value="FAD-oxidase_C"/>
    <property type="match status" value="1"/>
</dbReference>
<dbReference type="Pfam" id="PF01565">
    <property type="entry name" value="FAD_binding_4"/>
    <property type="match status" value="1"/>
</dbReference>
<dbReference type="SUPFAM" id="SSF56176">
    <property type="entry name" value="FAD-binding/transporter-associated domain-like"/>
    <property type="match status" value="1"/>
</dbReference>
<dbReference type="SUPFAM" id="SSF55103">
    <property type="entry name" value="FAD-linked oxidases, C-terminal domain"/>
    <property type="match status" value="1"/>
</dbReference>
<dbReference type="PROSITE" id="PS51387">
    <property type="entry name" value="FAD_PCMH"/>
    <property type="match status" value="1"/>
</dbReference>
<name>D2HDH_ARATH</name>